<feature type="signal peptide" evidence="3">
    <location>
        <begin position="1"/>
        <end position="28"/>
    </location>
</feature>
<feature type="propeptide" id="PRO_0000455739" description="Activation peptide" evidence="9">
    <location>
        <begin position="29"/>
        <end position="133"/>
    </location>
</feature>
<feature type="chain" id="PRO_5013421039" description="Cysteine endopeptidase Rep1">
    <location>
        <begin position="134"/>
        <end position="371"/>
    </location>
</feature>
<feature type="active site" evidence="5">
    <location>
        <position position="159"/>
    </location>
</feature>
<feature type="active site" evidence="6">
    <location>
        <position position="296"/>
    </location>
</feature>
<feature type="active site" evidence="7">
    <location>
        <position position="317"/>
    </location>
</feature>
<feature type="glycosylation site" description="N-linked (GlcNAc...) asparagine" evidence="4">
    <location>
        <position position="228"/>
    </location>
</feature>
<feature type="disulfide bond" evidence="1">
    <location>
        <begin position="156"/>
        <end position="198"/>
    </location>
</feature>
<feature type="disulfide bond" evidence="2">
    <location>
        <begin position="190"/>
        <end position="231"/>
    </location>
</feature>
<feature type="disulfide bond" evidence="2">
    <location>
        <begin position="290"/>
        <end position="342"/>
    </location>
</feature>
<feature type="sequence conflict" description="In Ref. 1; BAA11170." evidence="14" ref="1">
    <original>GGRGYRLR</original>
    <variation>APGYAP</variation>
    <location>
        <begin position="83"/>
        <end position="90"/>
    </location>
</feature>
<feature type="sequence conflict" description="In Ref. 3; AAD20453." evidence="14" ref="3">
    <original>GGRGYRLR</original>
    <variation>APGYPP</variation>
    <location>
        <begin position="83"/>
        <end position="90"/>
    </location>
</feature>
<feature type="sequence conflict" description="In Ref. 1; BAA11170 and 3; AAD20453." evidence="14" ref="1 3">
    <original>RAP</original>
    <variation>GG</variation>
    <location>
        <begin position="238"/>
        <end position="240"/>
    </location>
</feature>
<feature type="sequence conflict" description="In Ref. 1; BAA11170 and 3; AAD20453." evidence="14" ref="1 3">
    <original>A</original>
    <variation>P</variation>
    <location>
        <position position="367"/>
    </location>
</feature>
<protein>
    <recommendedName>
        <fullName evidence="11">Cysteine endopeptidase Rep1</fullName>
        <ecNumber evidence="9">3.4.22.-</ecNumber>
    </recommendedName>
    <alternativeName>
        <fullName evidence="14">Cysteine proteinase SAG12</fullName>
    </alternativeName>
    <alternativeName>
        <fullName evidence="13">Protein SENESCENCE-ASSOCIATED GENE 12</fullName>
        <shortName evidence="13">OsSAG12</shortName>
    </alternativeName>
    <alternativeName>
        <fullName evidence="14">Senescence-specific cysteine protease SAG12</fullName>
    </alternativeName>
</protein>
<sequence>MGRVISSWRVLAVVAALMAMAAVELCAAIPFDERDLESDEALWDLYERWQEHHHVPRHHGEKHRRFGAFKDNVRYIHEHNKRGGRGYRLRLNRFGDMGREEFRATFAGSHANDLRRDGLAAPPLPGFMYEGVRDLPRAVDWRRKGAVTGVKDQGKCGSCWAFSTVVSVEGINAIRTGRLVSLSEQELIDCDTADNSGCQGGLMENAFEYIKHSGGITTESAYPYRAANGTCDAVRARRAPLVVIDGHQNVPANSEAALAKAVANQPVSVAIDAGDQSFQFYSDGVFAGDCGTDLDHGVAVVGYGETNDGTEYWIVKNSWGTAWGEGGYIRMQRDSGYDGGLCGIAMEASYPVKFSPNRVTPRRALGAKETQ</sequence>
<name>REP1_ORYSJ</name>
<keyword id="KW-0903">Direct protein sequencing</keyword>
<keyword id="KW-1015">Disulfide bond</keyword>
<keyword id="KW-0325">Glycoprotein</keyword>
<keyword id="KW-0378">Hydrolase</keyword>
<keyword id="KW-0645">Protease</keyword>
<keyword id="KW-1185">Reference proteome</keyword>
<keyword id="KW-0732">Signal</keyword>
<keyword id="KW-0788">Thiol protease</keyword>
<keyword id="KW-0926">Vacuole</keyword>
<evidence type="ECO:0000250" key="1">
    <source>
        <dbReference type="UniProtKB" id="P07858"/>
    </source>
</evidence>
<evidence type="ECO:0000250" key="2">
    <source>
        <dbReference type="UniProtKB" id="P25250"/>
    </source>
</evidence>
<evidence type="ECO:0000255" key="3"/>
<evidence type="ECO:0000255" key="4">
    <source>
        <dbReference type="PROSITE-ProRule" id="PRU00498"/>
    </source>
</evidence>
<evidence type="ECO:0000255" key="5">
    <source>
        <dbReference type="PROSITE-ProRule" id="PRU10088"/>
    </source>
</evidence>
<evidence type="ECO:0000255" key="6">
    <source>
        <dbReference type="PROSITE-ProRule" id="PRU10089"/>
    </source>
</evidence>
<evidence type="ECO:0000255" key="7">
    <source>
        <dbReference type="PROSITE-ProRule" id="PRU10090"/>
    </source>
</evidence>
<evidence type="ECO:0000269" key="8">
    <source>
    </source>
</evidence>
<evidence type="ECO:0000269" key="9">
    <source>
    </source>
</evidence>
<evidence type="ECO:0000269" key="10">
    <source>
    </source>
</evidence>
<evidence type="ECO:0000303" key="11">
    <source>
    </source>
</evidence>
<evidence type="ECO:0000303" key="12">
    <source>
    </source>
</evidence>
<evidence type="ECO:0000303" key="13">
    <source>
    </source>
</evidence>
<evidence type="ECO:0000305" key="14"/>
<evidence type="ECO:0000312" key="15">
    <source>
        <dbReference type="EMBL" id="BAB92565.1"/>
    </source>
</evidence>
<evidence type="ECO:0000312" key="16">
    <source>
        <dbReference type="EMBL" id="BAS75803.1"/>
    </source>
</evidence>
<evidence type="ECO:0000312" key="17">
    <source>
        <dbReference type="EMBL" id="EAZ14551.1"/>
    </source>
</evidence>
<proteinExistence type="evidence at protein level"/>
<gene>
    <name evidence="11" type="primary">REP1</name>
    <name evidence="12" type="synonym">EP3A</name>
    <name evidence="13" type="synonym">SAG12</name>
    <name evidence="16" type="ordered locus">Os01g0907600</name>
    <name evidence="14" type="ordered locus">LOC_Os01g67980</name>
    <name evidence="17" type="ORF">OsJ_04473</name>
    <name evidence="15" type="ORF">P0497A05.8</name>
</gene>
<accession>Q7F3A8</accession>
<accession>O24190</accession>
<accession>Q0JGS6</accession>
<accession>Q5N711</accession>
<accession>Q9SXM1</accession>
<accession>Q9SYT5</accession>
<comment type="function">
    <text evidence="8 9">Cysteine endopeptidase that digests in vitro both the acidic and basic subunits of glutelin, the major seed storage protein of rice (PubMed:8706734). Acts as a negative regulator of cell death (PubMed:23938390).</text>
</comment>
<comment type="biophysicochemical properties">
    <phDependence>
        <text evidence="9">Optimum pH is 4.5-6.0.</text>
    </phDependence>
</comment>
<comment type="subcellular location">
    <subcellularLocation>
        <location evidence="8">Protein storage vacuole</location>
    </subcellularLocation>
</comment>
<comment type="tissue specificity">
    <text evidence="9">Expressed in germinating seeds.</text>
</comment>
<comment type="developmental stage">
    <text evidence="10">Expressed in seedlings, from 6 to 21 days after germination.</text>
</comment>
<comment type="induction">
    <text evidence="8 10">Induced by treatment with gibberellin (GA3) (PubMed:9435140). Induced during senescence and pathogen-induced cell death (PubMed:23938390).</text>
</comment>
<comment type="miscellaneous">
    <text evidence="8">Plants silencinge REP1 develop early senescence at varying levels and show enhanced cell death when inoculated with the bacterial pathogen Xanthomonas oryzae pv oryzae.</text>
</comment>
<comment type="similarity">
    <text evidence="5 6 7">Belongs to the peptidase C1 family.</text>
</comment>
<reference key="1">
    <citation type="journal article" date="1996" name="Eur. J. Biochem.">
        <title>Identification and characterization of a rice cysteine endopeptidase that digests glutelin.</title>
        <authorList>
            <person name="Kato H."/>
            <person name="Minamikawa T."/>
        </authorList>
    </citation>
    <scope>NUCLEOTIDE SEQUENCE [MRNA]</scope>
    <scope>PROTEIN SEQUENCE OF 134-153</scope>
    <scope>FUNCTION</scope>
    <scope>BIOPHYSICOCHEMICAL PROPERTIES</scope>
    <scope>TISSUE SPECIFICITY</scope>
</reference>
<reference key="2">
    <citation type="journal article" date="1999" name="Plant Cell Physiol.">
        <title>The structure and organization of two cysteine endopeptidase genes from rice.</title>
        <authorList>
            <person name="Kato H."/>
            <person name="Shintani A."/>
            <person name="Minamikawa T."/>
        </authorList>
    </citation>
    <scope>NUCLEOTIDE SEQUENCE [GENOMIC DNA]</scope>
</reference>
<reference key="3">
    <citation type="journal article" date="2000" name="Plant Physiol.">
        <title>Multiple mode regulation of a cysteine proteinase gene expression in rice.</title>
        <authorList>
            <person name="Ho S.L."/>
            <person name="Tong W.F."/>
            <person name="Yu S.M."/>
        </authorList>
    </citation>
    <scope>NUCLEOTIDE SEQUENCE [GENOMIC DNA]</scope>
</reference>
<reference key="4">
    <citation type="submission" date="2006-11" db="EMBL/GenBank/DDBJ databases">
        <title>Molecular cloning of cysteine endopeptidase genes in rice seeds.</title>
        <authorList>
            <person name="Yoon U.H."/>
            <person name="Kim Y.H."/>
        </authorList>
    </citation>
    <scope>NUCLEOTIDE SEQUENCE [MRNA]</scope>
</reference>
<reference key="5">
    <citation type="journal article" date="2002" name="Nature">
        <title>The genome sequence and structure of rice chromosome 1.</title>
        <authorList>
            <person name="Sasaki T."/>
            <person name="Matsumoto T."/>
            <person name="Yamamoto K."/>
            <person name="Sakata K."/>
            <person name="Baba T."/>
            <person name="Katayose Y."/>
            <person name="Wu J."/>
            <person name="Niimura Y."/>
            <person name="Cheng Z."/>
            <person name="Nagamura Y."/>
            <person name="Antonio B.A."/>
            <person name="Kanamori H."/>
            <person name="Hosokawa S."/>
            <person name="Masukawa M."/>
            <person name="Arikawa K."/>
            <person name="Chiden Y."/>
            <person name="Hayashi M."/>
            <person name="Okamoto M."/>
            <person name="Ando T."/>
            <person name="Aoki H."/>
            <person name="Arita K."/>
            <person name="Hamada M."/>
            <person name="Harada C."/>
            <person name="Hijishita S."/>
            <person name="Honda M."/>
            <person name="Ichikawa Y."/>
            <person name="Idonuma A."/>
            <person name="Iijima M."/>
            <person name="Ikeda M."/>
            <person name="Ikeno M."/>
            <person name="Ito S."/>
            <person name="Ito T."/>
            <person name="Ito Y."/>
            <person name="Ito Y."/>
            <person name="Iwabuchi A."/>
            <person name="Kamiya K."/>
            <person name="Karasawa W."/>
            <person name="Katagiri S."/>
            <person name="Kikuta A."/>
            <person name="Kobayashi N."/>
            <person name="Kono I."/>
            <person name="Machita K."/>
            <person name="Maehara T."/>
            <person name="Mizuno H."/>
            <person name="Mizubayashi T."/>
            <person name="Mukai Y."/>
            <person name="Nagasaki H."/>
            <person name="Nakashima M."/>
            <person name="Nakama Y."/>
            <person name="Nakamichi Y."/>
            <person name="Nakamura M."/>
            <person name="Namiki N."/>
            <person name="Negishi M."/>
            <person name="Ohta I."/>
            <person name="Ono N."/>
            <person name="Saji S."/>
            <person name="Sakai K."/>
            <person name="Shibata M."/>
            <person name="Shimokawa T."/>
            <person name="Shomura A."/>
            <person name="Song J."/>
            <person name="Takazaki Y."/>
            <person name="Terasawa K."/>
            <person name="Tsuji K."/>
            <person name="Waki K."/>
            <person name="Yamagata H."/>
            <person name="Yamane H."/>
            <person name="Yoshiki S."/>
            <person name="Yoshihara R."/>
            <person name="Yukawa K."/>
            <person name="Zhong H."/>
            <person name="Iwama H."/>
            <person name="Endo T."/>
            <person name="Ito H."/>
            <person name="Hahn J.H."/>
            <person name="Kim H.-I."/>
            <person name="Eun M.-Y."/>
            <person name="Yano M."/>
            <person name="Jiang J."/>
            <person name="Gojobori T."/>
        </authorList>
    </citation>
    <scope>NUCLEOTIDE SEQUENCE [LARGE SCALE GENOMIC DNA]</scope>
    <source>
        <strain>cv. Nipponbare</strain>
    </source>
</reference>
<reference key="6">
    <citation type="journal article" date="2005" name="Nature">
        <title>The map-based sequence of the rice genome.</title>
        <authorList>
            <consortium name="International rice genome sequencing project (IRGSP)"/>
        </authorList>
    </citation>
    <scope>NUCLEOTIDE SEQUENCE [LARGE SCALE GENOMIC DNA]</scope>
    <source>
        <strain>cv. Nipponbare</strain>
    </source>
</reference>
<reference key="7">
    <citation type="journal article" date="2008" name="Nucleic Acids Res.">
        <title>The rice annotation project database (RAP-DB): 2008 update.</title>
        <authorList>
            <consortium name="The rice annotation project (RAP)"/>
        </authorList>
    </citation>
    <scope>GENOME REANNOTATION</scope>
    <source>
        <strain>cv. Nipponbare</strain>
    </source>
</reference>
<reference key="8">
    <citation type="journal article" date="2013" name="Rice">
        <title>Improvement of the Oryza sativa Nipponbare reference genome using next generation sequence and optical map data.</title>
        <authorList>
            <person name="Kawahara Y."/>
            <person name="de la Bastide M."/>
            <person name="Hamilton J.P."/>
            <person name="Kanamori H."/>
            <person name="McCombie W.R."/>
            <person name="Ouyang S."/>
            <person name="Schwartz D.C."/>
            <person name="Tanaka T."/>
            <person name="Wu J."/>
            <person name="Zhou S."/>
            <person name="Childs K.L."/>
            <person name="Davidson R.M."/>
            <person name="Lin H."/>
            <person name="Quesada-Ocampo L."/>
            <person name="Vaillancourt B."/>
            <person name="Sakai H."/>
            <person name="Lee S.S."/>
            <person name="Kim J."/>
            <person name="Numa H."/>
            <person name="Itoh T."/>
            <person name="Buell C.R."/>
            <person name="Matsumoto T."/>
        </authorList>
    </citation>
    <scope>GENOME REANNOTATION</scope>
    <source>
        <strain>cv. Nipponbare</strain>
    </source>
</reference>
<reference key="9">
    <citation type="journal article" date="2005" name="PLoS Biol.">
        <title>The genomes of Oryza sativa: a history of duplications.</title>
        <authorList>
            <person name="Yu J."/>
            <person name="Wang J."/>
            <person name="Lin W."/>
            <person name="Li S."/>
            <person name="Li H."/>
            <person name="Zhou J."/>
            <person name="Ni P."/>
            <person name="Dong W."/>
            <person name="Hu S."/>
            <person name="Zeng C."/>
            <person name="Zhang J."/>
            <person name="Zhang Y."/>
            <person name="Li R."/>
            <person name="Xu Z."/>
            <person name="Li S."/>
            <person name="Li X."/>
            <person name="Zheng H."/>
            <person name="Cong L."/>
            <person name="Lin L."/>
            <person name="Yin J."/>
            <person name="Geng J."/>
            <person name="Li G."/>
            <person name="Shi J."/>
            <person name="Liu J."/>
            <person name="Lv H."/>
            <person name="Li J."/>
            <person name="Wang J."/>
            <person name="Deng Y."/>
            <person name="Ran L."/>
            <person name="Shi X."/>
            <person name="Wang X."/>
            <person name="Wu Q."/>
            <person name="Li C."/>
            <person name="Ren X."/>
            <person name="Wang J."/>
            <person name="Wang X."/>
            <person name="Li D."/>
            <person name="Liu D."/>
            <person name="Zhang X."/>
            <person name="Ji Z."/>
            <person name="Zhao W."/>
            <person name="Sun Y."/>
            <person name="Zhang Z."/>
            <person name="Bao J."/>
            <person name="Han Y."/>
            <person name="Dong L."/>
            <person name="Ji J."/>
            <person name="Chen P."/>
            <person name="Wu S."/>
            <person name="Liu J."/>
            <person name="Xiao Y."/>
            <person name="Bu D."/>
            <person name="Tan J."/>
            <person name="Yang L."/>
            <person name="Ye C."/>
            <person name="Zhang J."/>
            <person name="Xu J."/>
            <person name="Zhou Y."/>
            <person name="Yu Y."/>
            <person name="Zhang B."/>
            <person name="Zhuang S."/>
            <person name="Wei H."/>
            <person name="Liu B."/>
            <person name="Lei M."/>
            <person name="Yu H."/>
            <person name="Li Y."/>
            <person name="Xu H."/>
            <person name="Wei S."/>
            <person name="He X."/>
            <person name="Fang L."/>
            <person name="Zhang Z."/>
            <person name="Zhang Y."/>
            <person name="Huang X."/>
            <person name="Su Z."/>
            <person name="Tong W."/>
            <person name="Li J."/>
            <person name="Tong Z."/>
            <person name="Li S."/>
            <person name="Ye J."/>
            <person name="Wang L."/>
            <person name="Fang L."/>
            <person name="Lei T."/>
            <person name="Chen C.-S."/>
            <person name="Chen H.-C."/>
            <person name="Xu Z."/>
            <person name="Li H."/>
            <person name="Huang H."/>
            <person name="Zhang F."/>
            <person name="Xu H."/>
            <person name="Li N."/>
            <person name="Zhao C."/>
            <person name="Li S."/>
            <person name="Dong L."/>
            <person name="Huang Y."/>
            <person name="Li L."/>
            <person name="Xi Y."/>
            <person name="Qi Q."/>
            <person name="Li W."/>
            <person name="Zhang B."/>
            <person name="Hu W."/>
            <person name="Zhang Y."/>
            <person name="Tian X."/>
            <person name="Jiao Y."/>
            <person name="Liang X."/>
            <person name="Jin J."/>
            <person name="Gao L."/>
            <person name="Zheng W."/>
            <person name="Hao B."/>
            <person name="Liu S.-M."/>
            <person name="Wang W."/>
            <person name="Yuan L."/>
            <person name="Cao M."/>
            <person name="McDermott J."/>
            <person name="Samudrala R."/>
            <person name="Wang J."/>
            <person name="Wong G.K.-S."/>
            <person name="Yang H."/>
        </authorList>
    </citation>
    <scope>NUCLEOTIDE SEQUENCE [LARGE SCALE GENOMIC DNA]</scope>
    <source>
        <strain>cv. Nipponbare</strain>
    </source>
</reference>
<reference key="10">
    <citation type="journal article" date="1997" name="Plant Cell Physiol.">
        <title>Hormonal regulation of expression of two cysteine endopeptidase genes in rice seedlings.</title>
        <authorList>
            <person name="Shintani A."/>
            <person name="Kato H."/>
            <person name="Minamikawa T."/>
        </authorList>
    </citation>
    <scope>DEVELOPMENTAL STAGE</scope>
    <scope>INDUCTION BY GIBBERELLIN</scope>
</reference>
<reference key="11">
    <citation type="journal article" date="2013" name="J. Biosci.">
        <title>Down-regulation of OsSAG12-1 results in enhanced senescence and pathogen-induced cell death in transgenic rice plants.</title>
        <authorList>
            <person name="Singh S."/>
            <person name="Giri M.K."/>
            <person name="Singh P.K."/>
            <person name="Siddiqui A."/>
            <person name="Nandi A.K."/>
        </authorList>
    </citation>
    <scope>FUNCTION</scope>
    <scope>SUBCELLULAR LOCATION</scope>
    <scope>INDUCTION</scope>
</reference>
<organism>
    <name type="scientific">Oryza sativa subsp. japonica</name>
    <name type="common">Rice</name>
    <dbReference type="NCBI Taxonomy" id="39947"/>
    <lineage>
        <taxon>Eukaryota</taxon>
        <taxon>Viridiplantae</taxon>
        <taxon>Streptophyta</taxon>
        <taxon>Embryophyta</taxon>
        <taxon>Tracheophyta</taxon>
        <taxon>Spermatophyta</taxon>
        <taxon>Magnoliopsida</taxon>
        <taxon>Liliopsida</taxon>
        <taxon>Poales</taxon>
        <taxon>Poaceae</taxon>
        <taxon>BOP clade</taxon>
        <taxon>Oryzoideae</taxon>
        <taxon>Oryzeae</taxon>
        <taxon>Oryzinae</taxon>
        <taxon>Oryza</taxon>
        <taxon>Oryza sativa</taxon>
    </lineage>
</organism>
<dbReference type="EC" id="3.4.22.-" evidence="9"/>
<dbReference type="EMBL" id="D76415">
    <property type="protein sequence ID" value="BAA11170.1"/>
    <property type="molecule type" value="mRNA"/>
</dbReference>
<dbReference type="EMBL" id="AB004819">
    <property type="protein sequence ID" value="BAA83473.1"/>
    <property type="molecule type" value="Genomic_DNA"/>
</dbReference>
<dbReference type="EMBL" id="AF099203">
    <property type="protein sequence ID" value="AAD20453.1"/>
    <property type="molecule type" value="Genomic_DNA"/>
</dbReference>
<dbReference type="EMBL" id="EF122495">
    <property type="protein sequence ID" value="ABL74582.1"/>
    <property type="molecule type" value="mRNA"/>
</dbReference>
<dbReference type="EMBL" id="AP003380">
    <property type="protein sequence ID" value="BAB92565.1"/>
    <property type="molecule type" value="Genomic_DNA"/>
</dbReference>
<dbReference type="EMBL" id="AP006531">
    <property type="protein sequence ID" value="BAD82745.1"/>
    <property type="molecule type" value="Genomic_DNA"/>
</dbReference>
<dbReference type="EMBL" id="AP008207">
    <property type="protein sequence ID" value="BAF07052.1"/>
    <property type="molecule type" value="Genomic_DNA"/>
</dbReference>
<dbReference type="EMBL" id="AP014957">
    <property type="protein sequence ID" value="BAS75803.1"/>
    <property type="molecule type" value="Genomic_DNA"/>
</dbReference>
<dbReference type="EMBL" id="CM000138">
    <property type="protein sequence ID" value="EAZ14551.1"/>
    <property type="molecule type" value="Genomic_DNA"/>
</dbReference>
<dbReference type="PIR" id="T03694">
    <property type="entry name" value="T03694"/>
</dbReference>
<dbReference type="RefSeq" id="XP_015621378.1">
    <property type="nucleotide sequence ID" value="XM_015765892.1"/>
</dbReference>
<dbReference type="SMR" id="Q7F3A8"/>
<dbReference type="FunCoup" id="Q7F3A8">
    <property type="interactions" value="518"/>
</dbReference>
<dbReference type="STRING" id="39947.Q7F3A8"/>
<dbReference type="MEROPS" id="C01.024"/>
<dbReference type="GlyCosmos" id="Q7F3A8">
    <property type="glycosylation" value="1 site, No reported glycans"/>
</dbReference>
<dbReference type="PaxDb" id="39947-Q7F3A8"/>
<dbReference type="EnsemblPlants" id="Os01t0907600-01">
    <property type="protein sequence ID" value="Os01t0907600-01"/>
    <property type="gene ID" value="Os01g0907600"/>
</dbReference>
<dbReference type="Gramene" id="Os01t0907600-01">
    <property type="protein sequence ID" value="Os01t0907600-01"/>
    <property type="gene ID" value="Os01g0907600"/>
</dbReference>
<dbReference type="KEGG" id="dosa:Os01g0907600"/>
<dbReference type="eggNOG" id="KOG1543">
    <property type="taxonomic scope" value="Eukaryota"/>
</dbReference>
<dbReference type="HOGENOM" id="CLU_012184_1_0_1"/>
<dbReference type="InParanoid" id="Q7F3A8"/>
<dbReference type="OMA" id="EKGNHWI"/>
<dbReference type="OrthoDB" id="10253408at2759"/>
<dbReference type="Proteomes" id="UP000000763">
    <property type="component" value="Chromosome 1"/>
</dbReference>
<dbReference type="Proteomes" id="UP000007752">
    <property type="component" value="Chromosome 1"/>
</dbReference>
<dbReference type="Proteomes" id="UP000059680">
    <property type="component" value="Chromosome 1"/>
</dbReference>
<dbReference type="GO" id="GO:0005615">
    <property type="term" value="C:extracellular space"/>
    <property type="evidence" value="ECO:0000318"/>
    <property type="project" value="GO_Central"/>
</dbReference>
<dbReference type="GO" id="GO:0005764">
    <property type="term" value="C:lysosome"/>
    <property type="evidence" value="ECO:0000318"/>
    <property type="project" value="GO_Central"/>
</dbReference>
<dbReference type="GO" id="GO:0000326">
    <property type="term" value="C:protein storage vacuole"/>
    <property type="evidence" value="ECO:0000314"/>
    <property type="project" value="UniProtKB"/>
</dbReference>
<dbReference type="GO" id="GO:0004197">
    <property type="term" value="F:cysteine-type endopeptidase activity"/>
    <property type="evidence" value="ECO:0000314"/>
    <property type="project" value="UniProtKB"/>
</dbReference>
<dbReference type="GO" id="GO:0051603">
    <property type="term" value="P:proteolysis involved in protein catabolic process"/>
    <property type="evidence" value="ECO:0000314"/>
    <property type="project" value="UniProtKB"/>
</dbReference>
<dbReference type="CDD" id="cd02248">
    <property type="entry name" value="Peptidase_C1A"/>
    <property type="match status" value="1"/>
</dbReference>
<dbReference type="FunFam" id="3.90.70.10:FF:000023">
    <property type="entry name" value="Senescence-specific cysteine protease SAG39"/>
    <property type="match status" value="1"/>
</dbReference>
<dbReference type="Gene3D" id="3.90.70.10">
    <property type="entry name" value="Cysteine proteinases"/>
    <property type="match status" value="1"/>
</dbReference>
<dbReference type="InterPro" id="IPR038765">
    <property type="entry name" value="Papain-like_cys_pep_sf"/>
</dbReference>
<dbReference type="InterPro" id="IPR025661">
    <property type="entry name" value="Pept_asp_AS"/>
</dbReference>
<dbReference type="InterPro" id="IPR000169">
    <property type="entry name" value="Pept_cys_AS"/>
</dbReference>
<dbReference type="InterPro" id="IPR025660">
    <property type="entry name" value="Pept_his_AS"/>
</dbReference>
<dbReference type="InterPro" id="IPR013128">
    <property type="entry name" value="Peptidase_C1A"/>
</dbReference>
<dbReference type="InterPro" id="IPR000668">
    <property type="entry name" value="Peptidase_C1A_C"/>
</dbReference>
<dbReference type="InterPro" id="IPR039417">
    <property type="entry name" value="Peptidase_C1A_papain-like"/>
</dbReference>
<dbReference type="InterPro" id="IPR013201">
    <property type="entry name" value="Prot_inhib_I29"/>
</dbReference>
<dbReference type="PANTHER" id="PTHR12411">
    <property type="entry name" value="CYSTEINE PROTEASE FAMILY C1-RELATED"/>
    <property type="match status" value="1"/>
</dbReference>
<dbReference type="Pfam" id="PF08246">
    <property type="entry name" value="Inhibitor_I29"/>
    <property type="match status" value="1"/>
</dbReference>
<dbReference type="Pfam" id="PF00112">
    <property type="entry name" value="Peptidase_C1"/>
    <property type="match status" value="1"/>
</dbReference>
<dbReference type="PRINTS" id="PR00705">
    <property type="entry name" value="PAPAIN"/>
</dbReference>
<dbReference type="SMART" id="SM00848">
    <property type="entry name" value="Inhibitor_I29"/>
    <property type="match status" value="1"/>
</dbReference>
<dbReference type="SMART" id="SM00645">
    <property type="entry name" value="Pept_C1"/>
    <property type="match status" value="1"/>
</dbReference>
<dbReference type="SUPFAM" id="SSF54001">
    <property type="entry name" value="Cysteine proteinases"/>
    <property type="match status" value="1"/>
</dbReference>
<dbReference type="PROSITE" id="PS00640">
    <property type="entry name" value="THIOL_PROTEASE_ASN"/>
    <property type="match status" value="1"/>
</dbReference>
<dbReference type="PROSITE" id="PS00139">
    <property type="entry name" value="THIOL_PROTEASE_CYS"/>
    <property type="match status" value="1"/>
</dbReference>
<dbReference type="PROSITE" id="PS00639">
    <property type="entry name" value="THIOL_PROTEASE_HIS"/>
    <property type="match status" value="1"/>
</dbReference>